<proteinExistence type="inferred from homology"/>
<feature type="chain" id="PRO_1000060844" description="Gamma-glutamyl phosphate reductase">
    <location>
        <begin position="1"/>
        <end position="417"/>
    </location>
</feature>
<evidence type="ECO:0000255" key="1">
    <source>
        <dbReference type="HAMAP-Rule" id="MF_00412"/>
    </source>
</evidence>
<sequence>MLEQMGKAAKQASWQLAVLSTAKKNQVLSVIADKLEAESEVILQANEQDMEQARASGMSEALLDRLLLTPARLAAIANDVRQVCRLNDPVGHVLDGSLLDSGLKLERRRVPLGVIGVIYEARPNVTIDVASLCLKTGNAVILRGGKETHHTNQATVKVIQQALEQCGLPAAAVQAIESPDRALVNELLRLDRYVDMLIPRGGAGLHKLCREQSTIPVITGGIGVCHTYVDDSVDFDKALTVIENAKIQRPSACNSLETLLVNRNIAAEFLPALSSKMAVVGVTLHAAENAMPMLQDGPATVVAVAAEDYDDEWLSLDLNVALVDDIDQAIDHIRTHGTSHSDAILTRSLSSAEHFVRAVDSSAVYVNASTRFTDGGQFGLGAEVAVSTQKLHARGPMGLDALTTYKWIGYGDDLVRS</sequence>
<keyword id="KW-0028">Amino-acid biosynthesis</keyword>
<keyword id="KW-0963">Cytoplasm</keyword>
<keyword id="KW-0521">NADP</keyword>
<keyword id="KW-0560">Oxidoreductase</keyword>
<keyword id="KW-0641">Proline biosynthesis</keyword>
<dbReference type="EC" id="1.2.1.41" evidence="1"/>
<dbReference type="EMBL" id="CP000826">
    <property type="protein sequence ID" value="ABV40074.1"/>
    <property type="molecule type" value="Genomic_DNA"/>
</dbReference>
<dbReference type="SMR" id="A8GAD4"/>
<dbReference type="STRING" id="399741.Spro_0968"/>
<dbReference type="KEGG" id="spe:Spro_0968"/>
<dbReference type="eggNOG" id="COG0014">
    <property type="taxonomic scope" value="Bacteria"/>
</dbReference>
<dbReference type="HOGENOM" id="CLU_030231_0_0_6"/>
<dbReference type="UniPathway" id="UPA00098">
    <property type="reaction ID" value="UER00360"/>
</dbReference>
<dbReference type="GO" id="GO:0005737">
    <property type="term" value="C:cytoplasm"/>
    <property type="evidence" value="ECO:0007669"/>
    <property type="project" value="UniProtKB-SubCell"/>
</dbReference>
<dbReference type="GO" id="GO:0004350">
    <property type="term" value="F:glutamate-5-semialdehyde dehydrogenase activity"/>
    <property type="evidence" value="ECO:0007669"/>
    <property type="project" value="UniProtKB-UniRule"/>
</dbReference>
<dbReference type="GO" id="GO:0050661">
    <property type="term" value="F:NADP binding"/>
    <property type="evidence" value="ECO:0007669"/>
    <property type="project" value="InterPro"/>
</dbReference>
<dbReference type="GO" id="GO:0055129">
    <property type="term" value="P:L-proline biosynthetic process"/>
    <property type="evidence" value="ECO:0007669"/>
    <property type="project" value="UniProtKB-UniRule"/>
</dbReference>
<dbReference type="CDD" id="cd07079">
    <property type="entry name" value="ALDH_F18-19_ProA-GPR"/>
    <property type="match status" value="1"/>
</dbReference>
<dbReference type="FunFam" id="3.40.309.10:FF:000006">
    <property type="entry name" value="Gamma-glutamyl phosphate reductase"/>
    <property type="match status" value="1"/>
</dbReference>
<dbReference type="Gene3D" id="3.40.605.10">
    <property type="entry name" value="Aldehyde Dehydrogenase, Chain A, domain 1"/>
    <property type="match status" value="1"/>
</dbReference>
<dbReference type="Gene3D" id="3.40.309.10">
    <property type="entry name" value="Aldehyde Dehydrogenase, Chain A, domain 2"/>
    <property type="match status" value="1"/>
</dbReference>
<dbReference type="HAMAP" id="MF_00412">
    <property type="entry name" value="ProA"/>
    <property type="match status" value="1"/>
</dbReference>
<dbReference type="InterPro" id="IPR016161">
    <property type="entry name" value="Ald_DH/histidinol_DH"/>
</dbReference>
<dbReference type="InterPro" id="IPR016163">
    <property type="entry name" value="Ald_DH_C"/>
</dbReference>
<dbReference type="InterPro" id="IPR016162">
    <property type="entry name" value="Ald_DH_N"/>
</dbReference>
<dbReference type="InterPro" id="IPR015590">
    <property type="entry name" value="Aldehyde_DH_dom"/>
</dbReference>
<dbReference type="InterPro" id="IPR020593">
    <property type="entry name" value="G-glutamylP_reductase_CS"/>
</dbReference>
<dbReference type="InterPro" id="IPR012134">
    <property type="entry name" value="Glu-5-SA_DH"/>
</dbReference>
<dbReference type="InterPro" id="IPR000965">
    <property type="entry name" value="GPR_dom"/>
</dbReference>
<dbReference type="NCBIfam" id="NF001221">
    <property type="entry name" value="PRK00197.1"/>
    <property type="match status" value="1"/>
</dbReference>
<dbReference type="NCBIfam" id="TIGR00407">
    <property type="entry name" value="proA"/>
    <property type="match status" value="1"/>
</dbReference>
<dbReference type="PANTHER" id="PTHR11063:SF8">
    <property type="entry name" value="DELTA-1-PYRROLINE-5-CARBOXYLATE SYNTHASE"/>
    <property type="match status" value="1"/>
</dbReference>
<dbReference type="PANTHER" id="PTHR11063">
    <property type="entry name" value="GLUTAMATE SEMIALDEHYDE DEHYDROGENASE"/>
    <property type="match status" value="1"/>
</dbReference>
<dbReference type="Pfam" id="PF00171">
    <property type="entry name" value="Aldedh"/>
    <property type="match status" value="1"/>
</dbReference>
<dbReference type="PIRSF" id="PIRSF000151">
    <property type="entry name" value="GPR"/>
    <property type="match status" value="1"/>
</dbReference>
<dbReference type="SUPFAM" id="SSF53720">
    <property type="entry name" value="ALDH-like"/>
    <property type="match status" value="1"/>
</dbReference>
<dbReference type="PROSITE" id="PS01223">
    <property type="entry name" value="PROA"/>
    <property type="match status" value="1"/>
</dbReference>
<reference key="1">
    <citation type="submission" date="2007-09" db="EMBL/GenBank/DDBJ databases">
        <title>Complete sequence of chromosome of Serratia proteamaculans 568.</title>
        <authorList>
            <consortium name="US DOE Joint Genome Institute"/>
            <person name="Copeland A."/>
            <person name="Lucas S."/>
            <person name="Lapidus A."/>
            <person name="Barry K."/>
            <person name="Glavina del Rio T."/>
            <person name="Dalin E."/>
            <person name="Tice H."/>
            <person name="Pitluck S."/>
            <person name="Chain P."/>
            <person name="Malfatti S."/>
            <person name="Shin M."/>
            <person name="Vergez L."/>
            <person name="Schmutz J."/>
            <person name="Larimer F."/>
            <person name="Land M."/>
            <person name="Hauser L."/>
            <person name="Kyrpides N."/>
            <person name="Kim E."/>
            <person name="Taghavi S."/>
            <person name="Newman L."/>
            <person name="Vangronsveld J."/>
            <person name="van der Lelie D."/>
            <person name="Richardson P."/>
        </authorList>
    </citation>
    <scope>NUCLEOTIDE SEQUENCE [LARGE SCALE GENOMIC DNA]</scope>
    <source>
        <strain>568</strain>
    </source>
</reference>
<protein>
    <recommendedName>
        <fullName evidence="1">Gamma-glutamyl phosphate reductase</fullName>
        <shortName evidence="1">GPR</shortName>
        <ecNumber evidence="1">1.2.1.41</ecNumber>
    </recommendedName>
    <alternativeName>
        <fullName evidence="1">Glutamate-5-semialdehyde dehydrogenase</fullName>
    </alternativeName>
    <alternativeName>
        <fullName evidence="1">Glutamyl-gamma-semialdehyde dehydrogenase</fullName>
        <shortName evidence="1">GSA dehydrogenase</shortName>
    </alternativeName>
</protein>
<name>PROA_SERP5</name>
<gene>
    <name evidence="1" type="primary">proA</name>
    <name type="ordered locus">Spro_0968</name>
</gene>
<comment type="function">
    <text evidence="1">Catalyzes the NADPH-dependent reduction of L-glutamate 5-phosphate into L-glutamate 5-semialdehyde and phosphate. The product spontaneously undergoes cyclization to form 1-pyrroline-5-carboxylate.</text>
</comment>
<comment type="catalytic activity">
    <reaction evidence="1">
        <text>L-glutamate 5-semialdehyde + phosphate + NADP(+) = L-glutamyl 5-phosphate + NADPH + H(+)</text>
        <dbReference type="Rhea" id="RHEA:19541"/>
        <dbReference type="ChEBI" id="CHEBI:15378"/>
        <dbReference type="ChEBI" id="CHEBI:43474"/>
        <dbReference type="ChEBI" id="CHEBI:57783"/>
        <dbReference type="ChEBI" id="CHEBI:58066"/>
        <dbReference type="ChEBI" id="CHEBI:58274"/>
        <dbReference type="ChEBI" id="CHEBI:58349"/>
        <dbReference type="EC" id="1.2.1.41"/>
    </reaction>
</comment>
<comment type="pathway">
    <text evidence="1">Amino-acid biosynthesis; L-proline biosynthesis; L-glutamate 5-semialdehyde from L-glutamate: step 2/2.</text>
</comment>
<comment type="subcellular location">
    <subcellularLocation>
        <location evidence="1">Cytoplasm</location>
    </subcellularLocation>
</comment>
<comment type="similarity">
    <text evidence="1">Belongs to the gamma-glutamyl phosphate reductase family.</text>
</comment>
<accession>A8GAD4</accession>
<organism>
    <name type="scientific">Serratia proteamaculans (strain 568)</name>
    <dbReference type="NCBI Taxonomy" id="399741"/>
    <lineage>
        <taxon>Bacteria</taxon>
        <taxon>Pseudomonadati</taxon>
        <taxon>Pseudomonadota</taxon>
        <taxon>Gammaproteobacteria</taxon>
        <taxon>Enterobacterales</taxon>
        <taxon>Yersiniaceae</taxon>
        <taxon>Serratia</taxon>
    </lineage>
</organism>